<comment type="subunit">
    <text evidence="1">Homodimer.</text>
</comment>
<comment type="tissue specificity">
    <text>Striated muscle specific.</text>
</comment>
<comment type="domain">
    <text>The molecule is in a coiled coil structure that is formed by 2 polypeptide chains. The sequence exhibits a prominent seven-residues periodicity.</text>
</comment>
<comment type="similarity">
    <text evidence="2">Belongs to the tropomyosin family.</text>
</comment>
<protein>
    <recommendedName>
        <fullName>Tropomyosin-2</fullName>
    </recommendedName>
</protein>
<feature type="chain" id="PRO_0000205661" description="Tropomyosin-2">
    <location>
        <begin position="1"/>
        <end position="251"/>
    </location>
</feature>
<feature type="coiled-coil region" evidence="1">
    <location>
        <begin position="1"/>
        <end position="251"/>
    </location>
</feature>
<organism>
    <name type="scientific">Podocoryna carnea</name>
    <name type="common">Hydrozoan</name>
    <dbReference type="NCBI Taxonomy" id="6096"/>
    <lineage>
        <taxon>Eukaryota</taxon>
        <taxon>Metazoa</taxon>
        <taxon>Cnidaria</taxon>
        <taxon>Hydrozoa</taxon>
        <taxon>Hydroidolina</taxon>
        <taxon>Anthoathecata</taxon>
        <taxon>Filifera</taxon>
        <taxon>Hydractiniidae</taxon>
        <taxon>Podocoryna</taxon>
    </lineage>
</organism>
<keyword id="KW-0175">Coiled coil</keyword>
<keyword id="KW-0677">Repeat</keyword>
<name>TPM2_PODCA</name>
<evidence type="ECO:0000250" key="1"/>
<evidence type="ECO:0000305" key="2"/>
<sequence>MSGEEKLGKLRAKLKEITEQIDDADQKKVEAKHALVDSLARLEKNEVEVNSAKRRIKLIEKDLEDSSERLKVAEEKLIKVEAEEKKIEEARNLLEEAESADDEKMYNIEEEFKESKRTLESNETKYIEAQRKGVVISRDVEKTRDKADTLEKRVAVLEQTIASAGESLVELEEREGESSEREEINEEKLIFLAGQFKESEVRAEAAERSCNVLERNIFETENEINTWIQKRKEIEDEMIEMDTVADEPDDE</sequence>
<proteinExistence type="evidence at transcript level"/>
<dbReference type="EMBL" id="AJ249302">
    <property type="protein sequence ID" value="CAB55601.1"/>
    <property type="molecule type" value="mRNA"/>
</dbReference>
<dbReference type="SMR" id="Q9U5M4"/>
<dbReference type="Gene3D" id="1.20.5.170">
    <property type="match status" value="1"/>
</dbReference>
<dbReference type="InterPro" id="IPR000533">
    <property type="entry name" value="Tropomyosin"/>
</dbReference>
<dbReference type="PANTHER" id="PTHR19269">
    <property type="entry name" value="TROPOMYOSIN"/>
    <property type="match status" value="1"/>
</dbReference>
<dbReference type="Pfam" id="PF00261">
    <property type="entry name" value="Tropomyosin"/>
    <property type="match status" value="1"/>
</dbReference>
<dbReference type="PRINTS" id="PR00194">
    <property type="entry name" value="TROPOMYOSIN"/>
</dbReference>
<dbReference type="SUPFAM" id="SSF57997">
    <property type="entry name" value="Tropomyosin"/>
    <property type="match status" value="1"/>
</dbReference>
<accession>Q9U5M4</accession>
<reference key="1">
    <citation type="journal article" date="1999" name="J. Exp. Zool.">
        <title>Gene duplication and recruitment of a specific tropomyosin into striated muscle cells in the jellyfish Podocoryne carnea.</title>
        <authorList>
            <person name="Groeger H."/>
            <person name="Callaerts P."/>
            <person name="Gehring W.J."/>
            <person name="Schmid V."/>
        </authorList>
    </citation>
    <scope>NUCLEOTIDE SEQUENCE [MRNA]</scope>
</reference>
<gene>
    <name type="primary">TPM2</name>
</gene>